<dbReference type="EMBL" id="AF049902">
    <property type="protein sequence ID" value="AAC05497.1"/>
    <property type="molecule type" value="mRNA"/>
</dbReference>
<dbReference type="SMR" id="P69104"/>
<dbReference type="GO" id="GO:1990904">
    <property type="term" value="C:ribonucleoprotein complex"/>
    <property type="evidence" value="ECO:0007669"/>
    <property type="project" value="UniProtKB-KW"/>
</dbReference>
<dbReference type="GO" id="GO:0005840">
    <property type="term" value="C:ribosome"/>
    <property type="evidence" value="ECO:0007669"/>
    <property type="project" value="UniProtKB-KW"/>
</dbReference>
<dbReference type="GO" id="GO:0043022">
    <property type="term" value="F:ribosome binding"/>
    <property type="evidence" value="ECO:0007669"/>
    <property type="project" value="InterPro"/>
</dbReference>
<dbReference type="GO" id="GO:0045182">
    <property type="term" value="F:translation regulator activity"/>
    <property type="evidence" value="ECO:0007669"/>
    <property type="project" value="InterPro"/>
</dbReference>
<dbReference type="CDD" id="cd00200">
    <property type="entry name" value="WD40"/>
    <property type="match status" value="1"/>
</dbReference>
<dbReference type="FunFam" id="2.130.10.10:FF:000018">
    <property type="entry name" value="Receptor for activated C kinase 1"/>
    <property type="match status" value="1"/>
</dbReference>
<dbReference type="Gene3D" id="2.130.10.10">
    <property type="entry name" value="YVTN repeat-like/Quinoprotein amine dehydrogenase"/>
    <property type="match status" value="1"/>
</dbReference>
<dbReference type="InterPro" id="IPR020472">
    <property type="entry name" value="G-protein_beta_WD-40_rep"/>
</dbReference>
<dbReference type="InterPro" id="IPR045223">
    <property type="entry name" value="RACK1-like"/>
</dbReference>
<dbReference type="InterPro" id="IPR015943">
    <property type="entry name" value="WD40/YVTN_repeat-like_dom_sf"/>
</dbReference>
<dbReference type="InterPro" id="IPR019775">
    <property type="entry name" value="WD40_repeat_CS"/>
</dbReference>
<dbReference type="InterPro" id="IPR036322">
    <property type="entry name" value="WD40_repeat_dom_sf"/>
</dbReference>
<dbReference type="InterPro" id="IPR001680">
    <property type="entry name" value="WD40_rpt"/>
</dbReference>
<dbReference type="PANTHER" id="PTHR19868">
    <property type="entry name" value="RECEPTOR FOR ACTIVATED PROTEIN KINASE C RACK1"/>
    <property type="match status" value="1"/>
</dbReference>
<dbReference type="Pfam" id="PF00400">
    <property type="entry name" value="WD40"/>
    <property type="match status" value="6"/>
</dbReference>
<dbReference type="PRINTS" id="PR00320">
    <property type="entry name" value="GPROTEINBRPT"/>
</dbReference>
<dbReference type="SMART" id="SM00320">
    <property type="entry name" value="WD40"/>
    <property type="match status" value="7"/>
</dbReference>
<dbReference type="SUPFAM" id="SSF50978">
    <property type="entry name" value="WD40 repeat-like"/>
    <property type="match status" value="1"/>
</dbReference>
<dbReference type="PROSITE" id="PS00678">
    <property type="entry name" value="WD_REPEATS_1"/>
    <property type="match status" value="4"/>
</dbReference>
<dbReference type="PROSITE" id="PS50082">
    <property type="entry name" value="WD_REPEATS_2"/>
    <property type="match status" value="5"/>
</dbReference>
<dbReference type="PROSITE" id="PS50294">
    <property type="entry name" value="WD_REPEATS_REGION"/>
    <property type="match status" value="1"/>
</dbReference>
<name>GBLP_TRYBR</name>
<feature type="chain" id="PRO_0000127747" description="Small ribosomal subunit protein RACK1">
    <location>
        <begin position="1"/>
        <end position="318"/>
    </location>
</feature>
<feature type="repeat" description="WD 1">
    <location>
        <begin position="11"/>
        <end position="44"/>
    </location>
</feature>
<feature type="repeat" description="WD 2">
    <location>
        <begin position="65"/>
        <end position="95"/>
    </location>
</feature>
<feature type="repeat" description="WD 3">
    <location>
        <begin position="107"/>
        <end position="137"/>
    </location>
</feature>
<feature type="repeat" description="WD 4">
    <location>
        <begin position="150"/>
        <end position="182"/>
    </location>
</feature>
<feature type="repeat" description="WD 5">
    <location>
        <begin position="194"/>
        <end position="224"/>
    </location>
</feature>
<feature type="repeat" description="WD 6">
    <location>
        <begin position="235"/>
        <end position="264"/>
    </location>
</feature>
<feature type="repeat" description="WD 7">
    <location>
        <begin position="282"/>
        <end position="315"/>
    </location>
</feature>
<organism>
    <name type="scientific">Trypanosoma brucei rhodesiense</name>
    <dbReference type="NCBI Taxonomy" id="31286"/>
    <lineage>
        <taxon>Eukaryota</taxon>
        <taxon>Discoba</taxon>
        <taxon>Euglenozoa</taxon>
        <taxon>Kinetoplastea</taxon>
        <taxon>Metakinetoplastina</taxon>
        <taxon>Trypanosomatida</taxon>
        <taxon>Trypanosomatidae</taxon>
        <taxon>Trypanosoma</taxon>
    </lineage>
</organism>
<keyword id="KW-0677">Repeat</keyword>
<keyword id="KW-0687">Ribonucleoprotein</keyword>
<keyword id="KW-0689">Ribosomal protein</keyword>
<keyword id="KW-0853">WD repeat</keyword>
<proteinExistence type="evidence at transcript level"/>
<reference key="1">
    <citation type="journal article" date="1998" name="Cell Death Differ.">
        <title>Prohibitin and RACK homologues are up-regulated in trypanosomes induced to undergo apoptosis and in naturally occurring terminally differentiated forms.</title>
        <authorList>
            <person name="Welburn S.C."/>
            <person name="Murphy N.B."/>
        </authorList>
    </citation>
    <scope>NUCLEOTIDE SEQUENCE [MRNA]</scope>
    <source>
        <strain>ILTat 1.1</strain>
    </source>
</reference>
<evidence type="ECO:0000305" key="1"/>
<comment type="similarity">
    <text evidence="1">Belongs to the WD repeat G protein beta family. Ribosomal protein RACK1 subfamily.</text>
</comment>
<accession>P69104</accession>
<accession>O61075</accession>
<accession>Q94775</accession>
<protein>
    <recommendedName>
        <fullName evidence="1">Small ribosomal subunit protein RACK1</fullName>
    </recommendedName>
    <alternativeName>
        <fullName>Activated protein kinase C receptor homolog</fullName>
    </alternativeName>
    <alternativeName>
        <fullName>Guanine nucleotide-binding protein subunit beta-like protein</fullName>
    </alternativeName>
    <alternativeName>
        <fullName>Track</fullName>
    </alternativeName>
</protein>
<sequence length="318" mass="34690">MAVAYEGQLTGHRGWVTSLACPQTPETATKVVSTSRDKTLLSWGPNPDRHSSECSYGLPDRRLEGHSAFVSDVALSNNGNFAVSASWDHSLRLWNLQNGQCQYKFLGHTKDVLSVAFSPDNRQIVSGGRDNALRVWNVKGECMHTLSRGAHTDWVSCVRFSPSLDAPVIVSGGWDNLVKVWDLATGRLVTDLKGHTNYVTSVTVSPDGSLCASSDKDGVARLWDLTKGEALSEMAAGAPINQICFSPNRYWMCAATEKGIRIFDLENKDIIVELAPEHQGSKKIVPECVSIAWSADGSTLYSGYTDNVIRVWGVSENA</sequence>